<accession>Q8PDF3</accession>
<organism>
    <name type="scientific">Xanthomonas campestris pv. campestris (strain ATCC 33913 / DSM 3586 / NCPPB 528 / LMG 568 / P 25)</name>
    <dbReference type="NCBI Taxonomy" id="190485"/>
    <lineage>
        <taxon>Bacteria</taxon>
        <taxon>Pseudomonadati</taxon>
        <taxon>Pseudomonadota</taxon>
        <taxon>Gammaproteobacteria</taxon>
        <taxon>Lysobacterales</taxon>
        <taxon>Lysobacteraceae</taxon>
        <taxon>Xanthomonas</taxon>
    </lineage>
</organism>
<evidence type="ECO:0000255" key="1">
    <source>
        <dbReference type="HAMAP-Rule" id="MF_01260"/>
    </source>
</evidence>
<gene>
    <name evidence="1" type="primary">bioH</name>
    <name type="ordered locus">XCC0385</name>
</gene>
<name>BIOH_XANCP</name>
<keyword id="KW-0093">Biotin biosynthesis</keyword>
<keyword id="KW-0963">Cytoplasm</keyword>
<keyword id="KW-0378">Hydrolase</keyword>
<keyword id="KW-1185">Reference proteome</keyword>
<keyword id="KW-0719">Serine esterase</keyword>
<dbReference type="EC" id="3.1.1.85" evidence="1"/>
<dbReference type="EMBL" id="AE008922">
    <property type="protein sequence ID" value="AAM39704.1"/>
    <property type="molecule type" value="Genomic_DNA"/>
</dbReference>
<dbReference type="RefSeq" id="NP_635780.1">
    <property type="nucleotide sequence ID" value="NC_003902.1"/>
</dbReference>
<dbReference type="RefSeq" id="WP_011035639.1">
    <property type="nucleotide sequence ID" value="NC_003902.1"/>
</dbReference>
<dbReference type="SMR" id="Q8PDF3"/>
<dbReference type="STRING" id="190485.XCC0385"/>
<dbReference type="ESTHER" id="xanca-BIOH">
    <property type="family name" value="BioH"/>
</dbReference>
<dbReference type="EnsemblBacteria" id="AAM39704">
    <property type="protein sequence ID" value="AAM39704"/>
    <property type="gene ID" value="XCC0385"/>
</dbReference>
<dbReference type="KEGG" id="xcc:XCC0385"/>
<dbReference type="PATRIC" id="fig|190485.4.peg.424"/>
<dbReference type="eggNOG" id="COG2267">
    <property type="taxonomic scope" value="Bacteria"/>
</dbReference>
<dbReference type="HOGENOM" id="CLU_020336_12_2_6"/>
<dbReference type="OrthoDB" id="9780744at2"/>
<dbReference type="UniPathway" id="UPA00078"/>
<dbReference type="Proteomes" id="UP000001010">
    <property type="component" value="Chromosome"/>
</dbReference>
<dbReference type="GO" id="GO:0005737">
    <property type="term" value="C:cytoplasm"/>
    <property type="evidence" value="ECO:0007669"/>
    <property type="project" value="UniProtKB-SubCell"/>
</dbReference>
<dbReference type="GO" id="GO:0090499">
    <property type="term" value="F:pimelyl-[acyl-carrier protein] methyl ester esterase activity"/>
    <property type="evidence" value="ECO:0007669"/>
    <property type="project" value="UniProtKB-EC"/>
</dbReference>
<dbReference type="GO" id="GO:0009102">
    <property type="term" value="P:biotin biosynthetic process"/>
    <property type="evidence" value="ECO:0007669"/>
    <property type="project" value="UniProtKB-UniRule"/>
</dbReference>
<dbReference type="Gene3D" id="3.40.50.1820">
    <property type="entry name" value="alpha/beta hydrolase"/>
    <property type="match status" value="1"/>
</dbReference>
<dbReference type="HAMAP" id="MF_01260">
    <property type="entry name" value="Carboxylester"/>
    <property type="match status" value="1"/>
</dbReference>
<dbReference type="InterPro" id="IPR000073">
    <property type="entry name" value="AB_hydrolase_1"/>
</dbReference>
<dbReference type="InterPro" id="IPR029058">
    <property type="entry name" value="AB_hydrolase_fold"/>
</dbReference>
<dbReference type="InterPro" id="IPR050266">
    <property type="entry name" value="AB_hydrolase_sf"/>
</dbReference>
<dbReference type="InterPro" id="IPR010076">
    <property type="entry name" value="BioH"/>
</dbReference>
<dbReference type="NCBIfam" id="TIGR01738">
    <property type="entry name" value="bioH"/>
    <property type="match status" value="1"/>
</dbReference>
<dbReference type="PANTHER" id="PTHR43798:SF31">
    <property type="entry name" value="AB HYDROLASE SUPERFAMILY PROTEIN YCLE"/>
    <property type="match status" value="1"/>
</dbReference>
<dbReference type="PANTHER" id="PTHR43798">
    <property type="entry name" value="MONOACYLGLYCEROL LIPASE"/>
    <property type="match status" value="1"/>
</dbReference>
<dbReference type="Pfam" id="PF00561">
    <property type="entry name" value="Abhydrolase_1"/>
    <property type="match status" value="1"/>
</dbReference>
<dbReference type="SUPFAM" id="SSF53474">
    <property type="entry name" value="alpha/beta-Hydrolases"/>
    <property type="match status" value="1"/>
</dbReference>
<proteinExistence type="inferred from homology"/>
<protein>
    <recommendedName>
        <fullName evidence="1">Pimeloyl-[acyl-carrier protein] methyl ester esterase</fullName>
        <ecNumber evidence="1">3.1.1.85</ecNumber>
    </recommendedName>
    <alternativeName>
        <fullName evidence="1">Biotin synthesis protein BioH</fullName>
    </alternativeName>
    <alternativeName>
        <fullName evidence="1">Carboxylesterase BioH</fullName>
    </alternativeName>
</protein>
<reference key="1">
    <citation type="journal article" date="2002" name="Nature">
        <title>Comparison of the genomes of two Xanthomonas pathogens with differing host specificities.</title>
        <authorList>
            <person name="da Silva A.C.R."/>
            <person name="Ferro J.A."/>
            <person name="Reinach F.C."/>
            <person name="Farah C.S."/>
            <person name="Furlan L.R."/>
            <person name="Quaggio R.B."/>
            <person name="Monteiro-Vitorello C.B."/>
            <person name="Van Sluys M.A."/>
            <person name="Almeida N.F. Jr."/>
            <person name="Alves L.M.C."/>
            <person name="do Amaral A.M."/>
            <person name="Bertolini M.C."/>
            <person name="Camargo L.E.A."/>
            <person name="Camarotte G."/>
            <person name="Cannavan F."/>
            <person name="Cardozo J."/>
            <person name="Chambergo F."/>
            <person name="Ciapina L.P."/>
            <person name="Cicarelli R.M.B."/>
            <person name="Coutinho L.L."/>
            <person name="Cursino-Santos J.R."/>
            <person name="El-Dorry H."/>
            <person name="Faria J.B."/>
            <person name="Ferreira A.J.S."/>
            <person name="Ferreira R.C.C."/>
            <person name="Ferro M.I.T."/>
            <person name="Formighieri E.F."/>
            <person name="Franco M.C."/>
            <person name="Greggio C.C."/>
            <person name="Gruber A."/>
            <person name="Katsuyama A.M."/>
            <person name="Kishi L.T."/>
            <person name="Leite R.P."/>
            <person name="Lemos E.G.M."/>
            <person name="Lemos M.V.F."/>
            <person name="Locali E.C."/>
            <person name="Machado M.A."/>
            <person name="Madeira A.M.B.N."/>
            <person name="Martinez-Rossi N.M."/>
            <person name="Martins E.C."/>
            <person name="Meidanis J."/>
            <person name="Menck C.F.M."/>
            <person name="Miyaki C.Y."/>
            <person name="Moon D.H."/>
            <person name="Moreira L.M."/>
            <person name="Novo M.T.M."/>
            <person name="Okura V.K."/>
            <person name="Oliveira M.C."/>
            <person name="Oliveira V.R."/>
            <person name="Pereira H.A."/>
            <person name="Rossi A."/>
            <person name="Sena J.A.D."/>
            <person name="Silva C."/>
            <person name="de Souza R.F."/>
            <person name="Spinola L.A.F."/>
            <person name="Takita M.A."/>
            <person name="Tamura R.E."/>
            <person name="Teixeira E.C."/>
            <person name="Tezza R.I.D."/>
            <person name="Trindade dos Santos M."/>
            <person name="Truffi D."/>
            <person name="Tsai S.M."/>
            <person name="White F.F."/>
            <person name="Setubal J.C."/>
            <person name="Kitajima J.P."/>
        </authorList>
    </citation>
    <scope>NUCLEOTIDE SEQUENCE [LARGE SCALE GENOMIC DNA]</scope>
    <source>
        <strain>ATCC 33913 / DSM 3586 / NCPPB 528 / LMG 568 / P 25</strain>
    </source>
</reference>
<comment type="function">
    <text evidence="1">The physiological role of BioH is to remove the methyl group introduced by BioC when the pimeloyl moiety is complete. It allows to synthesize pimeloyl-ACP via the fatty acid synthetic pathway through the hydrolysis of the ester bonds of pimeloyl-ACP esters.</text>
</comment>
<comment type="catalytic activity">
    <reaction evidence="1">
        <text>6-carboxyhexanoyl-[ACP] methyl ester + H2O = 6-carboxyhexanoyl-[ACP] + methanol + H(+)</text>
        <dbReference type="Rhea" id="RHEA:42700"/>
        <dbReference type="Rhea" id="RHEA-COMP:9955"/>
        <dbReference type="Rhea" id="RHEA-COMP:10186"/>
        <dbReference type="ChEBI" id="CHEBI:15377"/>
        <dbReference type="ChEBI" id="CHEBI:15378"/>
        <dbReference type="ChEBI" id="CHEBI:17790"/>
        <dbReference type="ChEBI" id="CHEBI:78846"/>
        <dbReference type="ChEBI" id="CHEBI:82735"/>
        <dbReference type="EC" id="3.1.1.85"/>
    </reaction>
</comment>
<comment type="pathway">
    <text evidence="1">Cofactor biosynthesis; biotin biosynthesis.</text>
</comment>
<comment type="subunit">
    <text evidence="1">Monomer.</text>
</comment>
<comment type="subcellular location">
    <subcellularLocation>
        <location evidence="1">Cytoplasm</location>
    </subcellularLocation>
</comment>
<comment type="similarity">
    <text evidence="1">Belongs to the AB hydrolase superfamily. Carboxylesterase BioH family.</text>
</comment>
<sequence length="253" mass="26850">MHIDVIGHGPALVLLHGWALHGGVFAPLVERLAPHYQLHLVDLPGHGFSHDDTTPLALPHVVAAIAAATPAAVWVGWSLGGLFALHAAATQPQVRALAMIAATPRFVRGSDWPDAVEREVFVQFGQDLARDYRGTLDRFLALDTLGSAHARSELRSLRETLTARGEPAASALQDGLGLLERTDLRRALATLARPSLWIAGQRDRLVPAAGMHAAAARAPHAQALTIDGGGHAPFLGHADQVAEALHRFVAALP</sequence>
<feature type="chain" id="PRO_0000204502" description="Pimeloyl-[acyl-carrier protein] methyl ester esterase">
    <location>
        <begin position="1"/>
        <end position="253"/>
    </location>
</feature>
<feature type="active site" description="Nucleophile" evidence="1">
    <location>
        <position position="78"/>
    </location>
</feature>
<feature type="active site" evidence="1">
    <location>
        <position position="203"/>
    </location>
</feature>
<feature type="active site" evidence="1">
    <location>
        <position position="231"/>
    </location>
</feature>
<feature type="binding site" evidence="1">
    <location>
        <position position="18"/>
    </location>
    <ligand>
        <name>substrate</name>
    </ligand>
</feature>
<feature type="binding site" evidence="1">
    <location>
        <begin position="78"/>
        <end position="79"/>
    </location>
    <ligand>
        <name>substrate</name>
    </ligand>
</feature>
<feature type="binding site" evidence="1">
    <location>
        <begin position="139"/>
        <end position="143"/>
    </location>
    <ligand>
        <name>substrate</name>
    </ligand>
</feature>
<feature type="binding site" evidence="1">
    <location>
        <position position="231"/>
    </location>
    <ligand>
        <name>substrate</name>
    </ligand>
</feature>